<reference key="1">
    <citation type="journal article" date="2010" name="Appl. Environ. Microbiol.">
        <title>The genome sequence of Psychrobacter arcticus 273-4, a psychroactive Siberian permafrost bacterium, reveals mechanisms for adaptation to low-temperature growth.</title>
        <authorList>
            <person name="Ayala-del-Rio H.L."/>
            <person name="Chain P.S."/>
            <person name="Grzymski J.J."/>
            <person name="Ponder M.A."/>
            <person name="Ivanova N."/>
            <person name="Bergholz P.W."/>
            <person name="Di Bartolo G."/>
            <person name="Hauser L."/>
            <person name="Land M."/>
            <person name="Bakermans C."/>
            <person name="Rodrigues D."/>
            <person name="Klappenbach J."/>
            <person name="Zarka D."/>
            <person name="Larimer F."/>
            <person name="Richardson P."/>
            <person name="Murray A."/>
            <person name="Thomashow M."/>
            <person name="Tiedje J.M."/>
        </authorList>
    </citation>
    <scope>NUCLEOTIDE SEQUENCE [LARGE SCALE GENOMIC DNA]</scope>
    <source>
        <strain>DSM 17307 / VKM B-2377 / 273-4</strain>
    </source>
</reference>
<organism>
    <name type="scientific">Psychrobacter arcticus (strain DSM 17307 / VKM B-2377 / 273-4)</name>
    <dbReference type="NCBI Taxonomy" id="259536"/>
    <lineage>
        <taxon>Bacteria</taxon>
        <taxon>Pseudomonadati</taxon>
        <taxon>Pseudomonadota</taxon>
        <taxon>Gammaproteobacteria</taxon>
        <taxon>Moraxellales</taxon>
        <taxon>Moraxellaceae</taxon>
        <taxon>Psychrobacter</taxon>
    </lineage>
</organism>
<accession>Q4FPV3</accession>
<feature type="chain" id="PRO_1000060212" description="Na(+)-translocating NADH-quinone reductase subunit E">
    <location>
        <begin position="1"/>
        <end position="202"/>
    </location>
</feature>
<feature type="transmembrane region" description="Helical" evidence="1">
    <location>
        <begin position="5"/>
        <end position="25"/>
    </location>
</feature>
<feature type="transmembrane region" description="Helical" evidence="1">
    <location>
        <begin position="35"/>
        <end position="55"/>
    </location>
</feature>
<feature type="transmembrane region" description="Helical" evidence="1">
    <location>
        <begin position="81"/>
        <end position="101"/>
    </location>
</feature>
<feature type="transmembrane region" description="Helical" evidence="1">
    <location>
        <begin position="114"/>
        <end position="134"/>
    </location>
</feature>
<feature type="transmembrane region" description="Helical" evidence="1">
    <location>
        <begin position="144"/>
        <end position="164"/>
    </location>
</feature>
<feature type="transmembrane region" description="Helical" evidence="1">
    <location>
        <begin position="180"/>
        <end position="200"/>
    </location>
</feature>
<sequence length="202" mass="21575">MGHYVSLFITSVFIENMALAYFLGMCTFLAVSKKVSTAIGLGVAVVVVMAITVPLNNLLFQFILKDGALAWAGFPDIDLSFLGLLSYIGLIAATVQILEMFLDKFVPSLYNALGVFLPLITVNCAILGGVLFMVERDYNFGESVVYGVGAGFGWALAITALAGIREKLKYSDIPAPLRGLGITFITVGLMSLGFMSFGGMSI</sequence>
<name>NQRE_PSYA2</name>
<gene>
    <name evidence="1" type="primary">nqrE</name>
    <name type="ordered locus">Psyc_2108</name>
</gene>
<dbReference type="EC" id="7.2.1.1" evidence="1"/>
<dbReference type="EMBL" id="CP000082">
    <property type="protein sequence ID" value="AAZ19955.1"/>
    <property type="molecule type" value="Genomic_DNA"/>
</dbReference>
<dbReference type="RefSeq" id="WP_011281361.1">
    <property type="nucleotide sequence ID" value="NC_007204.1"/>
</dbReference>
<dbReference type="SMR" id="Q4FPV3"/>
<dbReference type="STRING" id="259536.Psyc_2108"/>
<dbReference type="GeneID" id="60256000"/>
<dbReference type="KEGG" id="par:Psyc_2108"/>
<dbReference type="eggNOG" id="COG2209">
    <property type="taxonomic scope" value="Bacteria"/>
</dbReference>
<dbReference type="HOGENOM" id="CLU_095255_0_0_6"/>
<dbReference type="OrthoDB" id="9803631at2"/>
<dbReference type="Proteomes" id="UP000000546">
    <property type="component" value="Chromosome"/>
</dbReference>
<dbReference type="GO" id="GO:0009276">
    <property type="term" value="C:Gram-negative-bacterium-type cell wall"/>
    <property type="evidence" value="ECO:0007669"/>
    <property type="project" value="InterPro"/>
</dbReference>
<dbReference type="GO" id="GO:0005886">
    <property type="term" value="C:plasma membrane"/>
    <property type="evidence" value="ECO:0007669"/>
    <property type="project" value="UniProtKB-SubCell"/>
</dbReference>
<dbReference type="GO" id="GO:0016655">
    <property type="term" value="F:oxidoreductase activity, acting on NAD(P)H, quinone or similar compound as acceptor"/>
    <property type="evidence" value="ECO:0007669"/>
    <property type="project" value="UniProtKB-UniRule"/>
</dbReference>
<dbReference type="GO" id="GO:0022904">
    <property type="term" value="P:respiratory electron transport chain"/>
    <property type="evidence" value="ECO:0007669"/>
    <property type="project" value="InterPro"/>
</dbReference>
<dbReference type="GO" id="GO:0006814">
    <property type="term" value="P:sodium ion transport"/>
    <property type="evidence" value="ECO:0007669"/>
    <property type="project" value="UniProtKB-UniRule"/>
</dbReference>
<dbReference type="HAMAP" id="MF_00429">
    <property type="entry name" value="NqrE"/>
    <property type="match status" value="1"/>
</dbReference>
<dbReference type="InterPro" id="IPR003667">
    <property type="entry name" value="NqrDE/RnfAE"/>
</dbReference>
<dbReference type="InterPro" id="IPR050133">
    <property type="entry name" value="NqrDE/RnfAE_oxidrdctase"/>
</dbReference>
<dbReference type="InterPro" id="IPR010967">
    <property type="entry name" value="NqrE"/>
</dbReference>
<dbReference type="NCBIfam" id="TIGR01940">
    <property type="entry name" value="nqrE"/>
    <property type="match status" value="1"/>
</dbReference>
<dbReference type="PANTHER" id="PTHR30335">
    <property type="entry name" value="INTEGRAL MEMBRANE PROTEIN OF SOXR-REDUCING COMPLEX"/>
    <property type="match status" value="1"/>
</dbReference>
<dbReference type="PANTHER" id="PTHR30335:SF1">
    <property type="entry name" value="NA(+)-TRANSLOCATING NADH-QUINONE REDUCTASE SUBUNIT E"/>
    <property type="match status" value="1"/>
</dbReference>
<dbReference type="Pfam" id="PF02508">
    <property type="entry name" value="Rnf-Nqr"/>
    <property type="match status" value="1"/>
</dbReference>
<dbReference type="PIRSF" id="PIRSF006102">
    <property type="entry name" value="NQR_DE"/>
    <property type="match status" value="1"/>
</dbReference>
<keyword id="KW-0997">Cell inner membrane</keyword>
<keyword id="KW-1003">Cell membrane</keyword>
<keyword id="KW-0406">Ion transport</keyword>
<keyword id="KW-0472">Membrane</keyword>
<keyword id="KW-0520">NAD</keyword>
<keyword id="KW-1185">Reference proteome</keyword>
<keyword id="KW-0915">Sodium</keyword>
<keyword id="KW-0739">Sodium transport</keyword>
<keyword id="KW-1278">Translocase</keyword>
<keyword id="KW-0812">Transmembrane</keyword>
<keyword id="KW-1133">Transmembrane helix</keyword>
<keyword id="KW-0813">Transport</keyword>
<keyword id="KW-0830">Ubiquinone</keyword>
<evidence type="ECO:0000255" key="1">
    <source>
        <dbReference type="HAMAP-Rule" id="MF_00429"/>
    </source>
</evidence>
<protein>
    <recommendedName>
        <fullName evidence="1">Na(+)-translocating NADH-quinone reductase subunit E</fullName>
        <shortName evidence="1">Na(+)-NQR subunit E</shortName>
        <shortName evidence="1">Na(+)-translocating NQR subunit E</shortName>
        <ecNumber evidence="1">7.2.1.1</ecNumber>
    </recommendedName>
    <alternativeName>
        <fullName evidence="1">NQR complex subunit E</fullName>
    </alternativeName>
    <alternativeName>
        <fullName evidence="1">NQR-1 subunit E</fullName>
    </alternativeName>
</protein>
<comment type="function">
    <text evidence="1">NQR complex catalyzes the reduction of ubiquinone-1 to ubiquinol by two successive reactions, coupled with the transport of Na(+) ions from the cytoplasm to the periplasm. NqrA to NqrE are probably involved in the second step, the conversion of ubisemiquinone to ubiquinol.</text>
</comment>
<comment type="catalytic activity">
    <reaction evidence="1">
        <text>a ubiquinone + n Na(+)(in) + NADH + H(+) = a ubiquinol + n Na(+)(out) + NAD(+)</text>
        <dbReference type="Rhea" id="RHEA:47748"/>
        <dbReference type="Rhea" id="RHEA-COMP:9565"/>
        <dbReference type="Rhea" id="RHEA-COMP:9566"/>
        <dbReference type="ChEBI" id="CHEBI:15378"/>
        <dbReference type="ChEBI" id="CHEBI:16389"/>
        <dbReference type="ChEBI" id="CHEBI:17976"/>
        <dbReference type="ChEBI" id="CHEBI:29101"/>
        <dbReference type="ChEBI" id="CHEBI:57540"/>
        <dbReference type="ChEBI" id="CHEBI:57945"/>
        <dbReference type="EC" id="7.2.1.1"/>
    </reaction>
</comment>
<comment type="subunit">
    <text evidence="1">Composed of six subunits; NqrA, NqrB, NqrC, NqrD, NqrE and NqrF.</text>
</comment>
<comment type="subcellular location">
    <subcellularLocation>
        <location evidence="1">Cell inner membrane</location>
        <topology evidence="1">Multi-pass membrane protein</topology>
    </subcellularLocation>
</comment>
<comment type="similarity">
    <text evidence="1">Belongs to the NqrDE/RnfAE family.</text>
</comment>
<proteinExistence type="inferred from homology"/>